<accession>P61661</accession>
<name>HIS7_THET2</name>
<comment type="catalytic activity">
    <reaction evidence="1">
        <text>D-erythro-1-(imidazol-4-yl)glycerol 3-phosphate = 3-(imidazol-4-yl)-2-oxopropyl phosphate + H2O</text>
        <dbReference type="Rhea" id="RHEA:11040"/>
        <dbReference type="ChEBI" id="CHEBI:15377"/>
        <dbReference type="ChEBI" id="CHEBI:57766"/>
        <dbReference type="ChEBI" id="CHEBI:58278"/>
        <dbReference type="EC" id="4.2.1.19"/>
    </reaction>
</comment>
<comment type="pathway">
    <text evidence="1">Amino-acid biosynthesis; L-histidine biosynthesis; L-histidine from 5-phospho-alpha-D-ribose 1-diphosphate: step 6/9.</text>
</comment>
<comment type="subcellular location">
    <subcellularLocation>
        <location evidence="1">Cytoplasm</location>
    </subcellularLocation>
</comment>
<comment type="similarity">
    <text evidence="1">Belongs to the imidazoleglycerol-phosphate dehydratase family.</text>
</comment>
<protein>
    <recommendedName>
        <fullName evidence="1">Imidazoleglycerol-phosphate dehydratase</fullName>
        <shortName evidence="1">IGPD</shortName>
        <ecNumber evidence="1">4.2.1.19</ecNumber>
    </recommendedName>
</protein>
<sequence>MREATVERATAETWVRLRLGLDGPTGGKVDTGLPFLDHMLLQLQRHGRFLLEVEARGDLEVDVHHLVEDVGIALGMALKEALGDGVGLERYAEAFAPMDETLVLCVLDLSGRPHLEFRPEAWPVVGEAGGVNHYHLREFLRGLVNHGRLTLHLRLLSGREAHHVVEASFKALARALHKATRRTGEGVPSTKGVL</sequence>
<dbReference type="EC" id="4.2.1.19" evidence="1"/>
<dbReference type="EMBL" id="AE017221">
    <property type="protein sequence ID" value="AAS80409.1"/>
    <property type="molecule type" value="Genomic_DNA"/>
</dbReference>
<dbReference type="RefSeq" id="WP_011172518.1">
    <property type="nucleotide sequence ID" value="NC_005835.1"/>
</dbReference>
<dbReference type="SMR" id="P61661"/>
<dbReference type="KEGG" id="tth:TT_C0061"/>
<dbReference type="eggNOG" id="COG0131">
    <property type="taxonomic scope" value="Bacteria"/>
</dbReference>
<dbReference type="HOGENOM" id="CLU_044308_3_0_0"/>
<dbReference type="OrthoDB" id="9790411at2"/>
<dbReference type="UniPathway" id="UPA00031">
    <property type="reaction ID" value="UER00011"/>
</dbReference>
<dbReference type="Proteomes" id="UP000000592">
    <property type="component" value="Chromosome"/>
</dbReference>
<dbReference type="GO" id="GO:0005737">
    <property type="term" value="C:cytoplasm"/>
    <property type="evidence" value="ECO:0007669"/>
    <property type="project" value="UniProtKB-SubCell"/>
</dbReference>
<dbReference type="GO" id="GO:0004424">
    <property type="term" value="F:imidazoleglycerol-phosphate dehydratase activity"/>
    <property type="evidence" value="ECO:0007669"/>
    <property type="project" value="UniProtKB-UniRule"/>
</dbReference>
<dbReference type="GO" id="GO:0000105">
    <property type="term" value="P:L-histidine biosynthetic process"/>
    <property type="evidence" value="ECO:0007669"/>
    <property type="project" value="UniProtKB-UniRule"/>
</dbReference>
<dbReference type="CDD" id="cd07914">
    <property type="entry name" value="IGPD"/>
    <property type="match status" value="1"/>
</dbReference>
<dbReference type="FunFam" id="3.30.230.40:FF:000001">
    <property type="entry name" value="Imidazoleglycerol-phosphate dehydratase HisB"/>
    <property type="match status" value="1"/>
</dbReference>
<dbReference type="FunFam" id="3.30.230.40:FF:000003">
    <property type="entry name" value="Imidazoleglycerol-phosphate dehydratase HisB"/>
    <property type="match status" value="1"/>
</dbReference>
<dbReference type="Gene3D" id="3.30.230.40">
    <property type="entry name" value="Imidazole glycerol phosphate dehydratase, domain 1"/>
    <property type="match status" value="2"/>
</dbReference>
<dbReference type="HAMAP" id="MF_00076">
    <property type="entry name" value="HisB"/>
    <property type="match status" value="1"/>
</dbReference>
<dbReference type="InterPro" id="IPR038494">
    <property type="entry name" value="IGPD_sf"/>
</dbReference>
<dbReference type="InterPro" id="IPR000807">
    <property type="entry name" value="ImidazoleglycerolP_deHydtase"/>
</dbReference>
<dbReference type="InterPro" id="IPR020565">
    <property type="entry name" value="ImidazoleglycerP_deHydtase_CS"/>
</dbReference>
<dbReference type="InterPro" id="IPR020568">
    <property type="entry name" value="Ribosomal_Su5_D2-typ_SF"/>
</dbReference>
<dbReference type="NCBIfam" id="NF002114">
    <property type="entry name" value="PRK00951.2-4"/>
    <property type="match status" value="1"/>
</dbReference>
<dbReference type="PANTHER" id="PTHR23133:SF2">
    <property type="entry name" value="IMIDAZOLEGLYCEROL-PHOSPHATE DEHYDRATASE"/>
    <property type="match status" value="1"/>
</dbReference>
<dbReference type="PANTHER" id="PTHR23133">
    <property type="entry name" value="IMIDAZOLEGLYCEROL-PHOSPHATE DEHYDRATASE HIS7"/>
    <property type="match status" value="1"/>
</dbReference>
<dbReference type="Pfam" id="PF00475">
    <property type="entry name" value="IGPD"/>
    <property type="match status" value="1"/>
</dbReference>
<dbReference type="SUPFAM" id="SSF54211">
    <property type="entry name" value="Ribosomal protein S5 domain 2-like"/>
    <property type="match status" value="2"/>
</dbReference>
<dbReference type="PROSITE" id="PS00954">
    <property type="entry name" value="IGP_DEHYDRATASE_1"/>
    <property type="match status" value="1"/>
</dbReference>
<dbReference type="PROSITE" id="PS00955">
    <property type="entry name" value="IGP_DEHYDRATASE_2"/>
    <property type="match status" value="1"/>
</dbReference>
<organism>
    <name type="scientific">Thermus thermophilus (strain ATCC BAA-163 / DSM 7039 / HB27)</name>
    <dbReference type="NCBI Taxonomy" id="262724"/>
    <lineage>
        <taxon>Bacteria</taxon>
        <taxon>Thermotogati</taxon>
        <taxon>Deinococcota</taxon>
        <taxon>Deinococci</taxon>
        <taxon>Thermales</taxon>
        <taxon>Thermaceae</taxon>
        <taxon>Thermus</taxon>
    </lineage>
</organism>
<evidence type="ECO:0000255" key="1">
    <source>
        <dbReference type="HAMAP-Rule" id="MF_00076"/>
    </source>
</evidence>
<keyword id="KW-0028">Amino-acid biosynthesis</keyword>
<keyword id="KW-0963">Cytoplasm</keyword>
<keyword id="KW-0368">Histidine biosynthesis</keyword>
<keyword id="KW-0456">Lyase</keyword>
<gene>
    <name evidence="1" type="primary">hisB</name>
    <name type="ordered locus">TT_C0061</name>
</gene>
<proteinExistence type="inferred from homology"/>
<reference key="1">
    <citation type="journal article" date="2004" name="Nat. Biotechnol.">
        <title>The genome sequence of the extreme thermophile Thermus thermophilus.</title>
        <authorList>
            <person name="Henne A."/>
            <person name="Brueggemann H."/>
            <person name="Raasch C."/>
            <person name="Wiezer A."/>
            <person name="Hartsch T."/>
            <person name="Liesegang H."/>
            <person name="Johann A."/>
            <person name="Lienard T."/>
            <person name="Gohl O."/>
            <person name="Martinez-Arias R."/>
            <person name="Jacobi C."/>
            <person name="Starkuviene V."/>
            <person name="Schlenczeck S."/>
            <person name="Dencker S."/>
            <person name="Huber R."/>
            <person name="Klenk H.-P."/>
            <person name="Kramer W."/>
            <person name="Merkl R."/>
            <person name="Gottschalk G."/>
            <person name="Fritz H.-J."/>
        </authorList>
    </citation>
    <scope>NUCLEOTIDE SEQUENCE [LARGE SCALE GENOMIC DNA]</scope>
    <source>
        <strain>ATCC BAA-163 / DSM 7039 / HB27</strain>
    </source>
</reference>
<feature type="chain" id="PRO_0000158181" description="Imidazoleglycerol-phosphate dehydratase">
    <location>
        <begin position="1"/>
        <end position="194"/>
    </location>
</feature>